<evidence type="ECO:0000255" key="1">
    <source>
        <dbReference type="HAMAP-Rule" id="MF_00289"/>
    </source>
</evidence>
<feature type="chain" id="PRO_0000124186" description="Proteasome subunit alpha">
    <location>
        <begin position="1"/>
        <end position="242"/>
    </location>
</feature>
<name>PSA_SULAC</name>
<accession>Q4JB24</accession>
<organism>
    <name type="scientific">Sulfolobus acidocaldarius (strain ATCC 33909 / DSM 639 / JCM 8929 / NBRC 15157 / NCIMB 11770)</name>
    <dbReference type="NCBI Taxonomy" id="330779"/>
    <lineage>
        <taxon>Archaea</taxon>
        <taxon>Thermoproteota</taxon>
        <taxon>Thermoprotei</taxon>
        <taxon>Sulfolobales</taxon>
        <taxon>Sulfolobaceae</taxon>
        <taxon>Sulfolobus</taxon>
    </lineage>
</organism>
<proteinExistence type="evidence at protein level"/>
<sequence>MALGPAAMGYDRAITIFSPDGSLYQVDYAFEAVKRGWTTLGVKTKSGVVLLAEKRKATQLLDVDGIEKIFMLDDHVGCTFAGLASDGRILIDYARSQALQHRLIYDEPISIEYLTKVISDVKQAYTQHGGVRPFGVALIVGGIDKGKQPKLLMTEPSGQFMPYYAVAIGQGGYTATEYLEKNYKEDLDIQSTILLALRALMATLKPGEKLNYSSVEIGYADVDSGTFKKLTTEERSDLLQKI</sequence>
<dbReference type="EMBL" id="CP000077">
    <property type="protein sequence ID" value="AAY80005.1"/>
    <property type="molecule type" value="Genomic_DNA"/>
</dbReference>
<dbReference type="RefSeq" id="WP_011277507.1">
    <property type="nucleotide sequence ID" value="NC_007181.1"/>
</dbReference>
<dbReference type="PDB" id="6Z46">
    <property type="method" value="X-ray"/>
    <property type="resolution" value="3.70 A"/>
    <property type="chains" value="A/B/C/D/E/F/G/O/P/Q/R/S/T/U=1-242"/>
</dbReference>
<dbReference type="PDBsum" id="6Z46"/>
<dbReference type="SMR" id="Q4JB24"/>
<dbReference type="STRING" id="330779.Saci_0613"/>
<dbReference type="GeneID" id="14551134"/>
<dbReference type="GeneID" id="78440956"/>
<dbReference type="KEGG" id="sai:Saci_0613"/>
<dbReference type="PATRIC" id="fig|330779.12.peg.592"/>
<dbReference type="eggNOG" id="arCOG00971">
    <property type="taxonomic scope" value="Archaea"/>
</dbReference>
<dbReference type="HOGENOM" id="CLU_035750_4_1_2"/>
<dbReference type="Proteomes" id="UP000001018">
    <property type="component" value="Chromosome"/>
</dbReference>
<dbReference type="GO" id="GO:0005737">
    <property type="term" value="C:cytoplasm"/>
    <property type="evidence" value="ECO:0007669"/>
    <property type="project" value="UniProtKB-SubCell"/>
</dbReference>
<dbReference type="GO" id="GO:0019773">
    <property type="term" value="C:proteasome core complex, alpha-subunit complex"/>
    <property type="evidence" value="ECO:0000250"/>
    <property type="project" value="UniProtKB"/>
</dbReference>
<dbReference type="GO" id="GO:0004298">
    <property type="term" value="F:threonine-type endopeptidase activity"/>
    <property type="evidence" value="ECO:0007669"/>
    <property type="project" value="InterPro"/>
</dbReference>
<dbReference type="GO" id="GO:0010498">
    <property type="term" value="P:proteasomal protein catabolic process"/>
    <property type="evidence" value="ECO:0007669"/>
    <property type="project" value="UniProtKB-UniRule"/>
</dbReference>
<dbReference type="GO" id="GO:0006511">
    <property type="term" value="P:ubiquitin-dependent protein catabolic process"/>
    <property type="evidence" value="ECO:0007669"/>
    <property type="project" value="InterPro"/>
</dbReference>
<dbReference type="CDD" id="cd03756">
    <property type="entry name" value="proteasome_alpha_archeal"/>
    <property type="match status" value="1"/>
</dbReference>
<dbReference type="FunFam" id="3.60.20.10:FF:000004">
    <property type="entry name" value="Proteasome subunit alpha type-4"/>
    <property type="match status" value="1"/>
</dbReference>
<dbReference type="Gene3D" id="3.60.20.10">
    <property type="entry name" value="Glutamine Phosphoribosylpyrophosphate, subunit 1, domain 1"/>
    <property type="match status" value="1"/>
</dbReference>
<dbReference type="HAMAP" id="MF_00289_A">
    <property type="entry name" value="Proteasome_A_A"/>
    <property type="match status" value="1"/>
</dbReference>
<dbReference type="InterPro" id="IPR029055">
    <property type="entry name" value="Ntn_hydrolases_N"/>
</dbReference>
<dbReference type="InterPro" id="IPR050115">
    <property type="entry name" value="Proteasome_alpha"/>
</dbReference>
<dbReference type="InterPro" id="IPR023332">
    <property type="entry name" value="Proteasome_alpha-type"/>
</dbReference>
<dbReference type="InterPro" id="IPR019982">
    <property type="entry name" value="Proteasome_asu_arc"/>
</dbReference>
<dbReference type="InterPro" id="IPR000426">
    <property type="entry name" value="Proteasome_asu_N"/>
</dbReference>
<dbReference type="InterPro" id="IPR001353">
    <property type="entry name" value="Proteasome_sua/b"/>
</dbReference>
<dbReference type="NCBIfam" id="TIGR03633">
    <property type="entry name" value="arc_protsome_A"/>
    <property type="match status" value="1"/>
</dbReference>
<dbReference type="NCBIfam" id="NF003075">
    <property type="entry name" value="PRK03996.1"/>
    <property type="match status" value="1"/>
</dbReference>
<dbReference type="PANTHER" id="PTHR11599">
    <property type="entry name" value="PROTEASOME SUBUNIT ALPHA/BETA"/>
    <property type="match status" value="1"/>
</dbReference>
<dbReference type="Pfam" id="PF00227">
    <property type="entry name" value="Proteasome"/>
    <property type="match status" value="1"/>
</dbReference>
<dbReference type="Pfam" id="PF10584">
    <property type="entry name" value="Proteasome_A_N"/>
    <property type="match status" value="1"/>
</dbReference>
<dbReference type="SMART" id="SM00948">
    <property type="entry name" value="Proteasome_A_N"/>
    <property type="match status" value="1"/>
</dbReference>
<dbReference type="SUPFAM" id="SSF56235">
    <property type="entry name" value="N-terminal nucleophile aminohydrolases (Ntn hydrolases)"/>
    <property type="match status" value="1"/>
</dbReference>
<dbReference type="PROSITE" id="PS00388">
    <property type="entry name" value="PROTEASOME_ALPHA_1"/>
    <property type="match status" value="1"/>
</dbReference>
<dbReference type="PROSITE" id="PS51475">
    <property type="entry name" value="PROTEASOME_ALPHA_2"/>
    <property type="match status" value="1"/>
</dbReference>
<comment type="function">
    <text evidence="1">Component of the proteasome core, a large protease complex with broad specificity involved in protein degradation.</text>
</comment>
<comment type="activity regulation">
    <text evidence="1">The formation of the proteasomal ATPase PAN-20S proteasome complex, via the docking of the C-termini of PAN into the intersubunit pockets in the alpha-rings, triggers opening of the gate for substrate entry. Interconversion between the open-gate and close-gate conformations leads to a dynamic regulation of the 20S proteasome proteolysis activity.</text>
</comment>
<comment type="subunit">
    <text evidence="1">The 20S proteasome core is composed of 14 alpha and 14 beta subunits that assemble into four stacked heptameric rings, resulting in a barrel-shaped structure. The two inner rings, each composed of seven catalytic beta subunits, are sandwiched by two outer rings, each composed of seven alpha subunits. The catalytic chamber with the active sites is on the inside of the barrel. Has a gated structure, the ends of the cylinder being occluded by the N-termini of the alpha-subunits. Is capped at one or both ends by the proteasome regulatory ATPase, PAN.</text>
</comment>
<comment type="subcellular location">
    <subcellularLocation>
        <location evidence="1">Cytoplasm</location>
    </subcellularLocation>
</comment>
<comment type="similarity">
    <text evidence="1">Belongs to the peptidase T1A family.</text>
</comment>
<protein>
    <recommendedName>
        <fullName evidence="1">Proteasome subunit alpha</fullName>
    </recommendedName>
    <alternativeName>
        <fullName evidence="1">20S proteasome alpha subunit</fullName>
    </alternativeName>
    <alternativeName>
        <fullName evidence="1">Proteasome core protein PsmA</fullName>
    </alternativeName>
</protein>
<keyword id="KW-0002">3D-structure</keyword>
<keyword id="KW-0963">Cytoplasm</keyword>
<keyword id="KW-0647">Proteasome</keyword>
<keyword id="KW-1185">Reference proteome</keyword>
<reference key="1">
    <citation type="journal article" date="2005" name="J. Bacteriol.">
        <title>The genome of Sulfolobus acidocaldarius, a model organism of the Crenarchaeota.</title>
        <authorList>
            <person name="Chen L."/>
            <person name="Bruegger K."/>
            <person name="Skovgaard M."/>
            <person name="Redder P."/>
            <person name="She Q."/>
            <person name="Torarinsson E."/>
            <person name="Greve B."/>
            <person name="Awayez M."/>
            <person name="Zibat A."/>
            <person name="Klenk H.-P."/>
            <person name="Garrett R.A."/>
        </authorList>
    </citation>
    <scope>NUCLEOTIDE SEQUENCE [LARGE SCALE GENOMIC DNA]</scope>
    <source>
        <strain>ATCC 33909 / DSM 639 / JCM 8929 / NBRC 15157 / NCIMB 11770</strain>
    </source>
</reference>
<gene>
    <name evidence="1" type="primary">psmA</name>
    <name type="ordered locus">Saci_0613</name>
</gene>